<name>COBS_SHEHH</name>
<comment type="function">
    <text evidence="1">Joins adenosylcobinamide-GDP and alpha-ribazole to generate adenosylcobalamin (Ado-cobalamin). Also synthesizes adenosylcobalamin 5'-phosphate from adenosylcobinamide-GDP and alpha-ribazole 5'-phosphate.</text>
</comment>
<comment type="catalytic activity">
    <reaction evidence="1">
        <text>alpha-ribazole + adenosylcob(III)inamide-GDP = adenosylcob(III)alamin + GMP + H(+)</text>
        <dbReference type="Rhea" id="RHEA:16049"/>
        <dbReference type="ChEBI" id="CHEBI:10329"/>
        <dbReference type="ChEBI" id="CHEBI:15378"/>
        <dbReference type="ChEBI" id="CHEBI:18408"/>
        <dbReference type="ChEBI" id="CHEBI:58115"/>
        <dbReference type="ChEBI" id="CHEBI:60487"/>
        <dbReference type="EC" id="2.7.8.26"/>
    </reaction>
</comment>
<comment type="catalytic activity">
    <reaction evidence="1">
        <text>alpha-ribazole 5'-phosphate + adenosylcob(III)inamide-GDP = adenosylcob(III)alamin 5'-phosphate + GMP + H(+)</text>
        <dbReference type="Rhea" id="RHEA:23560"/>
        <dbReference type="ChEBI" id="CHEBI:15378"/>
        <dbReference type="ChEBI" id="CHEBI:57918"/>
        <dbReference type="ChEBI" id="CHEBI:58115"/>
        <dbReference type="ChEBI" id="CHEBI:60487"/>
        <dbReference type="ChEBI" id="CHEBI:60493"/>
        <dbReference type="EC" id="2.7.8.26"/>
    </reaction>
</comment>
<comment type="cofactor">
    <cofactor evidence="1">
        <name>Mg(2+)</name>
        <dbReference type="ChEBI" id="CHEBI:18420"/>
    </cofactor>
</comment>
<comment type="pathway">
    <text evidence="1">Cofactor biosynthesis; adenosylcobalamin biosynthesis; adenosylcobalamin from cob(II)yrinate a,c-diamide: step 7/7.</text>
</comment>
<comment type="subcellular location">
    <subcellularLocation>
        <location evidence="1">Cell inner membrane</location>
        <topology evidence="1">Multi-pass membrane protein</topology>
    </subcellularLocation>
</comment>
<comment type="similarity">
    <text evidence="1">Belongs to the CobS family.</text>
</comment>
<sequence length="259" mass="27882">MQLWQKQLNLFFIAMGFFTRIPMPKWIEVDADKLNKASRYFGLVGLLVGAISAAVYSLMLYWVSPSVAIVFAMITSVLVTGGFHEDGLADTADGLGGGWTVEAKLNIMKDSRLGSYGALALVLALLLKWQLLTELALFDPSSVSLALIVGHCLSRVVAASFIFSEEYVSDTDTSKSKPLAQQQGINELSILLASGVLALLLVGLVPALVLITGLVIVRYGFIRLFRSQIGGYTGDTLGAAQQGSELSCYLLLLILGVSW</sequence>
<reference key="1">
    <citation type="submission" date="2008-01" db="EMBL/GenBank/DDBJ databases">
        <title>Complete sequence of Shewanella halifaxensis HAW-EB4.</title>
        <authorList>
            <consortium name="US DOE Joint Genome Institute"/>
            <person name="Copeland A."/>
            <person name="Lucas S."/>
            <person name="Lapidus A."/>
            <person name="Glavina del Rio T."/>
            <person name="Dalin E."/>
            <person name="Tice H."/>
            <person name="Bruce D."/>
            <person name="Goodwin L."/>
            <person name="Pitluck S."/>
            <person name="Sims D."/>
            <person name="Brettin T."/>
            <person name="Detter J.C."/>
            <person name="Han C."/>
            <person name="Kuske C.R."/>
            <person name="Schmutz J."/>
            <person name="Larimer F."/>
            <person name="Land M."/>
            <person name="Hauser L."/>
            <person name="Kyrpides N."/>
            <person name="Kim E."/>
            <person name="Zhao J.-S."/>
            <person name="Richardson P."/>
        </authorList>
    </citation>
    <scope>NUCLEOTIDE SEQUENCE [LARGE SCALE GENOMIC DNA]</scope>
    <source>
        <strain>HAW-EB4</strain>
    </source>
</reference>
<keyword id="KW-0997">Cell inner membrane</keyword>
<keyword id="KW-1003">Cell membrane</keyword>
<keyword id="KW-0169">Cobalamin biosynthesis</keyword>
<keyword id="KW-0460">Magnesium</keyword>
<keyword id="KW-0472">Membrane</keyword>
<keyword id="KW-0808">Transferase</keyword>
<keyword id="KW-0812">Transmembrane</keyword>
<keyword id="KW-1133">Transmembrane helix</keyword>
<gene>
    <name evidence="1" type="primary">cobS</name>
    <name type="ordered locus">Shal_3456</name>
</gene>
<feature type="chain" id="PRO_1000083268" description="Adenosylcobinamide-GDP ribazoletransferase">
    <location>
        <begin position="1"/>
        <end position="259"/>
    </location>
</feature>
<feature type="transmembrane region" description="Helical" evidence="1">
    <location>
        <begin position="9"/>
        <end position="29"/>
    </location>
</feature>
<feature type="transmembrane region" description="Helical" evidence="1">
    <location>
        <begin position="43"/>
        <end position="63"/>
    </location>
</feature>
<feature type="transmembrane region" description="Helical" evidence="1">
    <location>
        <begin position="64"/>
        <end position="84"/>
    </location>
</feature>
<feature type="transmembrane region" description="Helical" evidence="1">
    <location>
        <begin position="118"/>
        <end position="138"/>
    </location>
</feature>
<feature type="transmembrane region" description="Helical" evidence="1">
    <location>
        <begin position="143"/>
        <end position="163"/>
    </location>
</feature>
<feature type="transmembrane region" description="Helical" evidence="1">
    <location>
        <begin position="196"/>
        <end position="216"/>
    </location>
</feature>
<accession>B0TSP8</accession>
<organism>
    <name type="scientific">Shewanella halifaxensis (strain HAW-EB4)</name>
    <dbReference type="NCBI Taxonomy" id="458817"/>
    <lineage>
        <taxon>Bacteria</taxon>
        <taxon>Pseudomonadati</taxon>
        <taxon>Pseudomonadota</taxon>
        <taxon>Gammaproteobacteria</taxon>
        <taxon>Alteromonadales</taxon>
        <taxon>Shewanellaceae</taxon>
        <taxon>Shewanella</taxon>
    </lineage>
</organism>
<proteinExistence type="inferred from homology"/>
<dbReference type="EC" id="2.7.8.26" evidence="1"/>
<dbReference type="EMBL" id="CP000931">
    <property type="protein sequence ID" value="ABZ78002.1"/>
    <property type="molecule type" value="Genomic_DNA"/>
</dbReference>
<dbReference type="RefSeq" id="WP_012278522.1">
    <property type="nucleotide sequence ID" value="NC_010334.1"/>
</dbReference>
<dbReference type="STRING" id="458817.Shal_3456"/>
<dbReference type="KEGG" id="shl:Shal_3456"/>
<dbReference type="eggNOG" id="COG0368">
    <property type="taxonomic scope" value="Bacteria"/>
</dbReference>
<dbReference type="HOGENOM" id="CLU_057426_1_1_6"/>
<dbReference type="OrthoDB" id="9794626at2"/>
<dbReference type="UniPathway" id="UPA00148">
    <property type="reaction ID" value="UER00238"/>
</dbReference>
<dbReference type="Proteomes" id="UP000001317">
    <property type="component" value="Chromosome"/>
</dbReference>
<dbReference type="GO" id="GO:0005886">
    <property type="term" value="C:plasma membrane"/>
    <property type="evidence" value="ECO:0007669"/>
    <property type="project" value="UniProtKB-SubCell"/>
</dbReference>
<dbReference type="GO" id="GO:0051073">
    <property type="term" value="F:adenosylcobinamide-GDP ribazoletransferase activity"/>
    <property type="evidence" value="ECO:0007669"/>
    <property type="project" value="UniProtKB-UniRule"/>
</dbReference>
<dbReference type="GO" id="GO:0008818">
    <property type="term" value="F:cobalamin 5'-phosphate synthase activity"/>
    <property type="evidence" value="ECO:0007669"/>
    <property type="project" value="UniProtKB-UniRule"/>
</dbReference>
<dbReference type="GO" id="GO:0009236">
    <property type="term" value="P:cobalamin biosynthetic process"/>
    <property type="evidence" value="ECO:0007669"/>
    <property type="project" value="UniProtKB-UniRule"/>
</dbReference>
<dbReference type="HAMAP" id="MF_00719">
    <property type="entry name" value="CobS"/>
    <property type="match status" value="1"/>
</dbReference>
<dbReference type="InterPro" id="IPR003805">
    <property type="entry name" value="CobS"/>
</dbReference>
<dbReference type="NCBIfam" id="TIGR00317">
    <property type="entry name" value="cobS"/>
    <property type="match status" value="1"/>
</dbReference>
<dbReference type="NCBIfam" id="NF001277">
    <property type="entry name" value="PRK00235.1-3"/>
    <property type="match status" value="1"/>
</dbReference>
<dbReference type="PANTHER" id="PTHR34148">
    <property type="entry name" value="ADENOSYLCOBINAMIDE-GDP RIBAZOLETRANSFERASE"/>
    <property type="match status" value="1"/>
</dbReference>
<dbReference type="PANTHER" id="PTHR34148:SF1">
    <property type="entry name" value="ADENOSYLCOBINAMIDE-GDP RIBAZOLETRANSFERASE"/>
    <property type="match status" value="1"/>
</dbReference>
<dbReference type="Pfam" id="PF02654">
    <property type="entry name" value="CobS"/>
    <property type="match status" value="1"/>
</dbReference>
<evidence type="ECO:0000255" key="1">
    <source>
        <dbReference type="HAMAP-Rule" id="MF_00719"/>
    </source>
</evidence>
<protein>
    <recommendedName>
        <fullName evidence="1">Adenosylcobinamide-GDP ribazoletransferase</fullName>
        <ecNumber evidence="1">2.7.8.26</ecNumber>
    </recommendedName>
    <alternativeName>
        <fullName evidence="1">Cobalamin synthase</fullName>
    </alternativeName>
    <alternativeName>
        <fullName evidence="1">Cobalamin-5'-phosphate synthase</fullName>
    </alternativeName>
</protein>